<name>RL9_ACAM1</name>
<proteinExistence type="inferred from homology"/>
<gene>
    <name evidence="1" type="primary">rplI</name>
    <name evidence="1" type="synonym">rpl9</name>
    <name type="ordered locus">AM1_5350</name>
</gene>
<feature type="chain" id="PRO_1000081463" description="Large ribosomal subunit protein bL9">
    <location>
        <begin position="1"/>
        <end position="152"/>
    </location>
</feature>
<accession>B0CAV7</accession>
<sequence>MGKRVQLVLNEDVRKLGYSGDLVEVAPGYARNYLIPKGIAYRATPGVLKQIEHRKAEELKRLEGIKDEAAKQKVALQTIGTFRIEQKAGEEDMLFGRVTSPDVAELIANISGFEIDKRGIDIPDIRKLGTYSVDIKLHPEVIATVKVEVVPE</sequence>
<protein>
    <recommendedName>
        <fullName evidence="1">Large ribosomal subunit protein bL9</fullName>
    </recommendedName>
    <alternativeName>
        <fullName evidence="2">50S ribosomal protein L9</fullName>
    </alternativeName>
</protein>
<organism>
    <name type="scientific">Acaryochloris marina (strain MBIC 11017)</name>
    <dbReference type="NCBI Taxonomy" id="329726"/>
    <lineage>
        <taxon>Bacteria</taxon>
        <taxon>Bacillati</taxon>
        <taxon>Cyanobacteriota</taxon>
        <taxon>Cyanophyceae</taxon>
        <taxon>Acaryochloridales</taxon>
        <taxon>Acaryochloridaceae</taxon>
        <taxon>Acaryochloris</taxon>
    </lineage>
</organism>
<keyword id="KW-1185">Reference proteome</keyword>
<keyword id="KW-0687">Ribonucleoprotein</keyword>
<keyword id="KW-0689">Ribosomal protein</keyword>
<keyword id="KW-0694">RNA-binding</keyword>
<keyword id="KW-0699">rRNA-binding</keyword>
<dbReference type="EMBL" id="CP000828">
    <property type="protein sequence ID" value="ABW30308.1"/>
    <property type="molecule type" value="Genomic_DNA"/>
</dbReference>
<dbReference type="RefSeq" id="WP_010473006.1">
    <property type="nucleotide sequence ID" value="NC_009925.1"/>
</dbReference>
<dbReference type="SMR" id="B0CAV7"/>
<dbReference type="STRING" id="329726.AM1_5350"/>
<dbReference type="KEGG" id="amr:AM1_5350"/>
<dbReference type="eggNOG" id="COG0359">
    <property type="taxonomic scope" value="Bacteria"/>
</dbReference>
<dbReference type="HOGENOM" id="CLU_078938_5_1_3"/>
<dbReference type="OrthoDB" id="9788336at2"/>
<dbReference type="Proteomes" id="UP000000268">
    <property type="component" value="Chromosome"/>
</dbReference>
<dbReference type="GO" id="GO:1990904">
    <property type="term" value="C:ribonucleoprotein complex"/>
    <property type="evidence" value="ECO:0007669"/>
    <property type="project" value="UniProtKB-KW"/>
</dbReference>
<dbReference type="GO" id="GO:0005840">
    <property type="term" value="C:ribosome"/>
    <property type="evidence" value="ECO:0007669"/>
    <property type="project" value="UniProtKB-KW"/>
</dbReference>
<dbReference type="GO" id="GO:0019843">
    <property type="term" value="F:rRNA binding"/>
    <property type="evidence" value="ECO:0007669"/>
    <property type="project" value="UniProtKB-UniRule"/>
</dbReference>
<dbReference type="GO" id="GO:0003735">
    <property type="term" value="F:structural constituent of ribosome"/>
    <property type="evidence" value="ECO:0007669"/>
    <property type="project" value="InterPro"/>
</dbReference>
<dbReference type="GO" id="GO:0006412">
    <property type="term" value="P:translation"/>
    <property type="evidence" value="ECO:0007669"/>
    <property type="project" value="UniProtKB-UniRule"/>
</dbReference>
<dbReference type="Gene3D" id="3.10.430.100">
    <property type="entry name" value="Ribosomal protein L9, C-terminal domain"/>
    <property type="match status" value="1"/>
</dbReference>
<dbReference type="Gene3D" id="3.40.5.10">
    <property type="entry name" value="Ribosomal protein L9, N-terminal domain"/>
    <property type="match status" value="1"/>
</dbReference>
<dbReference type="HAMAP" id="MF_00503">
    <property type="entry name" value="Ribosomal_bL9"/>
    <property type="match status" value="1"/>
</dbReference>
<dbReference type="InterPro" id="IPR000244">
    <property type="entry name" value="Ribosomal_bL9"/>
</dbReference>
<dbReference type="InterPro" id="IPR009027">
    <property type="entry name" value="Ribosomal_bL9/RNase_H1_N"/>
</dbReference>
<dbReference type="InterPro" id="IPR020594">
    <property type="entry name" value="Ribosomal_bL9_bac/chp"/>
</dbReference>
<dbReference type="InterPro" id="IPR020069">
    <property type="entry name" value="Ribosomal_bL9_C"/>
</dbReference>
<dbReference type="InterPro" id="IPR036791">
    <property type="entry name" value="Ribosomal_bL9_C_sf"/>
</dbReference>
<dbReference type="InterPro" id="IPR020070">
    <property type="entry name" value="Ribosomal_bL9_N"/>
</dbReference>
<dbReference type="InterPro" id="IPR036935">
    <property type="entry name" value="Ribosomal_bL9_N_sf"/>
</dbReference>
<dbReference type="NCBIfam" id="TIGR00158">
    <property type="entry name" value="L9"/>
    <property type="match status" value="1"/>
</dbReference>
<dbReference type="PANTHER" id="PTHR21368">
    <property type="entry name" value="50S RIBOSOMAL PROTEIN L9"/>
    <property type="match status" value="1"/>
</dbReference>
<dbReference type="Pfam" id="PF03948">
    <property type="entry name" value="Ribosomal_L9_C"/>
    <property type="match status" value="1"/>
</dbReference>
<dbReference type="Pfam" id="PF01281">
    <property type="entry name" value="Ribosomal_L9_N"/>
    <property type="match status" value="1"/>
</dbReference>
<dbReference type="SUPFAM" id="SSF55658">
    <property type="entry name" value="L9 N-domain-like"/>
    <property type="match status" value="1"/>
</dbReference>
<dbReference type="SUPFAM" id="SSF55653">
    <property type="entry name" value="Ribosomal protein L9 C-domain"/>
    <property type="match status" value="1"/>
</dbReference>
<dbReference type="PROSITE" id="PS00651">
    <property type="entry name" value="RIBOSOMAL_L9"/>
    <property type="match status" value="1"/>
</dbReference>
<comment type="function">
    <text evidence="1">Binds to the 23S rRNA.</text>
</comment>
<comment type="similarity">
    <text evidence="1">Belongs to the bacterial ribosomal protein bL9 family.</text>
</comment>
<evidence type="ECO:0000255" key="1">
    <source>
        <dbReference type="HAMAP-Rule" id="MF_00503"/>
    </source>
</evidence>
<evidence type="ECO:0000305" key="2"/>
<reference key="1">
    <citation type="journal article" date="2008" name="Proc. Natl. Acad. Sci. U.S.A.">
        <title>Niche adaptation and genome expansion in the chlorophyll d-producing cyanobacterium Acaryochloris marina.</title>
        <authorList>
            <person name="Swingley W.D."/>
            <person name="Chen M."/>
            <person name="Cheung P.C."/>
            <person name="Conrad A.L."/>
            <person name="Dejesa L.C."/>
            <person name="Hao J."/>
            <person name="Honchak B.M."/>
            <person name="Karbach L.E."/>
            <person name="Kurdoglu A."/>
            <person name="Lahiri S."/>
            <person name="Mastrian S.D."/>
            <person name="Miyashita H."/>
            <person name="Page L."/>
            <person name="Ramakrishna P."/>
            <person name="Satoh S."/>
            <person name="Sattley W.M."/>
            <person name="Shimada Y."/>
            <person name="Taylor H.L."/>
            <person name="Tomo T."/>
            <person name="Tsuchiya T."/>
            <person name="Wang Z.T."/>
            <person name="Raymond J."/>
            <person name="Mimuro M."/>
            <person name="Blankenship R.E."/>
            <person name="Touchman J.W."/>
        </authorList>
    </citation>
    <scope>NUCLEOTIDE SEQUENCE [LARGE SCALE GENOMIC DNA]</scope>
    <source>
        <strain>MBIC 11017</strain>
    </source>
</reference>